<gene>
    <name evidence="1" type="primary">zupT</name>
    <name type="ordered locus">Clim_1152</name>
</gene>
<reference key="1">
    <citation type="submission" date="2008-05" db="EMBL/GenBank/DDBJ databases">
        <title>Complete sequence of Chlorobium limicola DSM 245.</title>
        <authorList>
            <consortium name="US DOE Joint Genome Institute"/>
            <person name="Lucas S."/>
            <person name="Copeland A."/>
            <person name="Lapidus A."/>
            <person name="Glavina del Rio T."/>
            <person name="Dalin E."/>
            <person name="Tice H."/>
            <person name="Bruce D."/>
            <person name="Goodwin L."/>
            <person name="Pitluck S."/>
            <person name="Schmutz J."/>
            <person name="Larimer F."/>
            <person name="Land M."/>
            <person name="Hauser L."/>
            <person name="Kyrpides N."/>
            <person name="Ovchinnikova G."/>
            <person name="Zhao F."/>
            <person name="Li T."/>
            <person name="Liu Z."/>
            <person name="Overmann J."/>
            <person name="Bryant D.A."/>
            <person name="Richardson P."/>
        </authorList>
    </citation>
    <scope>NUCLEOTIDE SEQUENCE [LARGE SCALE GENOMIC DNA]</scope>
    <source>
        <strain>DSM 245 / NBRC 103803 / 6330</strain>
    </source>
</reference>
<accession>B3ECE6</accession>
<keyword id="KW-0997">Cell inner membrane</keyword>
<keyword id="KW-1003">Cell membrane</keyword>
<keyword id="KW-0406">Ion transport</keyword>
<keyword id="KW-0408">Iron</keyword>
<keyword id="KW-0472">Membrane</keyword>
<keyword id="KW-0479">Metal-binding</keyword>
<keyword id="KW-0812">Transmembrane</keyword>
<keyword id="KW-1133">Transmembrane helix</keyword>
<keyword id="KW-0813">Transport</keyword>
<keyword id="KW-0862">Zinc</keyword>
<keyword id="KW-0864">Zinc transport</keyword>
<dbReference type="EMBL" id="CP001097">
    <property type="protein sequence ID" value="ACD90221.1"/>
    <property type="molecule type" value="Genomic_DNA"/>
</dbReference>
<dbReference type="RefSeq" id="WP_012466098.1">
    <property type="nucleotide sequence ID" value="NC_010803.1"/>
</dbReference>
<dbReference type="SMR" id="B3ECE6"/>
<dbReference type="STRING" id="290315.Clim_1152"/>
<dbReference type="KEGG" id="cli:Clim_1152"/>
<dbReference type="eggNOG" id="COG0428">
    <property type="taxonomic scope" value="Bacteria"/>
</dbReference>
<dbReference type="HOGENOM" id="CLU_015114_1_3_10"/>
<dbReference type="OrthoDB" id="9787346at2"/>
<dbReference type="Proteomes" id="UP000008841">
    <property type="component" value="Chromosome"/>
</dbReference>
<dbReference type="GO" id="GO:0005886">
    <property type="term" value="C:plasma membrane"/>
    <property type="evidence" value="ECO:0007669"/>
    <property type="project" value="UniProtKB-SubCell"/>
</dbReference>
<dbReference type="GO" id="GO:0046872">
    <property type="term" value="F:metal ion binding"/>
    <property type="evidence" value="ECO:0007669"/>
    <property type="project" value="UniProtKB-KW"/>
</dbReference>
<dbReference type="GO" id="GO:0005385">
    <property type="term" value="F:zinc ion transmembrane transporter activity"/>
    <property type="evidence" value="ECO:0007669"/>
    <property type="project" value="UniProtKB-UniRule"/>
</dbReference>
<dbReference type="HAMAP" id="MF_00548">
    <property type="entry name" value="ZupT"/>
    <property type="match status" value="1"/>
</dbReference>
<dbReference type="InterPro" id="IPR003689">
    <property type="entry name" value="ZIP"/>
</dbReference>
<dbReference type="InterPro" id="IPR023498">
    <property type="entry name" value="Zn_transptr_ZupT"/>
</dbReference>
<dbReference type="NCBIfam" id="NF003243">
    <property type="entry name" value="PRK04201.1"/>
    <property type="match status" value="1"/>
</dbReference>
<dbReference type="PANTHER" id="PTHR11040:SF205">
    <property type="entry name" value="ZINC TRANSPORTER ZUPT"/>
    <property type="match status" value="1"/>
</dbReference>
<dbReference type="PANTHER" id="PTHR11040">
    <property type="entry name" value="ZINC/IRON TRANSPORTER"/>
    <property type="match status" value="1"/>
</dbReference>
<dbReference type="Pfam" id="PF02535">
    <property type="entry name" value="Zip"/>
    <property type="match status" value="2"/>
</dbReference>
<feature type="chain" id="PRO_1000128945" description="Zinc transporter ZupT">
    <location>
        <begin position="1"/>
        <end position="266"/>
    </location>
</feature>
<feature type="transmembrane region" description="Helical" evidence="1">
    <location>
        <begin position="8"/>
        <end position="28"/>
    </location>
</feature>
<feature type="transmembrane region" description="Helical" evidence="1">
    <location>
        <begin position="35"/>
        <end position="55"/>
    </location>
</feature>
<feature type="transmembrane region" description="Helical" evidence="1">
    <location>
        <begin position="70"/>
        <end position="90"/>
    </location>
</feature>
<feature type="transmembrane region" description="Helical" evidence="1">
    <location>
        <begin position="123"/>
        <end position="143"/>
    </location>
</feature>
<feature type="transmembrane region" description="Helical" evidence="1">
    <location>
        <begin position="152"/>
        <end position="172"/>
    </location>
</feature>
<feature type="transmembrane region" description="Helical" evidence="1">
    <location>
        <begin position="185"/>
        <end position="205"/>
    </location>
</feature>
<feature type="transmembrane region" description="Helical" evidence="1">
    <location>
        <begin position="209"/>
        <end position="229"/>
    </location>
</feature>
<feature type="transmembrane region" description="Helical" evidence="1">
    <location>
        <begin position="246"/>
        <end position="266"/>
    </location>
</feature>
<feature type="binding site" description="M2 metal binding site" evidence="1">
    <location>
        <position position="134"/>
    </location>
    <ligand>
        <name>Fe(2+)</name>
        <dbReference type="ChEBI" id="CHEBI:29033"/>
    </ligand>
</feature>
<feature type="binding site" description="M2 metal binding site" evidence="1">
    <location>
        <position position="137"/>
    </location>
    <ligand>
        <name>Fe(2+)</name>
        <dbReference type="ChEBI" id="CHEBI:29033"/>
    </ligand>
</feature>
<feature type="binding site" description="M1 metal binding site" evidence="1">
    <location>
        <position position="137"/>
    </location>
    <ligand>
        <name>Zn(2+)</name>
        <dbReference type="ChEBI" id="CHEBI:29105"/>
    </ligand>
</feature>
<feature type="binding site" description="M1 metal binding site" evidence="1">
    <location>
        <position position="162"/>
    </location>
    <ligand>
        <name>Zn(2+)</name>
        <dbReference type="ChEBI" id="CHEBI:29105"/>
    </ligand>
</feature>
<feature type="binding site" description="M2 metal binding site" evidence="1">
    <location>
        <position position="163"/>
    </location>
    <ligand>
        <name>Fe(2+)</name>
        <dbReference type="ChEBI" id="CHEBI:29033"/>
    </ligand>
</feature>
<feature type="binding site" description="M2 metal binding site" evidence="1">
    <location>
        <position position="166"/>
    </location>
    <ligand>
        <name>Fe(2+)</name>
        <dbReference type="ChEBI" id="CHEBI:29033"/>
    </ligand>
</feature>
<feature type="binding site" description="M1 metal binding site" evidence="1">
    <location>
        <position position="166"/>
    </location>
    <ligand>
        <name>Zn(2+)</name>
        <dbReference type="ChEBI" id="CHEBI:29105"/>
    </ligand>
</feature>
<feature type="binding site" description="M2 metal binding site" evidence="1">
    <location>
        <position position="195"/>
    </location>
    <ligand>
        <name>Fe(2+)</name>
        <dbReference type="ChEBI" id="CHEBI:29033"/>
    </ligand>
</feature>
<protein>
    <recommendedName>
        <fullName evidence="1">Zinc transporter ZupT</fullName>
    </recommendedName>
</protein>
<comment type="function">
    <text evidence="1">Mediates zinc uptake. May also transport other divalent cations.</text>
</comment>
<comment type="catalytic activity">
    <reaction evidence="1">
        <text>Zn(2+)(in) = Zn(2+)(out)</text>
        <dbReference type="Rhea" id="RHEA:29351"/>
        <dbReference type="ChEBI" id="CHEBI:29105"/>
    </reaction>
</comment>
<comment type="subcellular location">
    <subcellularLocation>
        <location evidence="1">Cell inner membrane</location>
        <topology evidence="1">Multi-pass membrane protein</topology>
    </subcellularLocation>
</comment>
<comment type="similarity">
    <text evidence="1">Belongs to the ZIP transporter (TC 2.A.5) family. ZupT subfamily.</text>
</comment>
<organism>
    <name type="scientific">Chlorobium limicola (strain DSM 245 / NBRC 103803 / 6330)</name>
    <dbReference type="NCBI Taxonomy" id="290315"/>
    <lineage>
        <taxon>Bacteria</taxon>
        <taxon>Pseudomonadati</taxon>
        <taxon>Chlorobiota</taxon>
        <taxon>Chlorobiia</taxon>
        <taxon>Chlorobiales</taxon>
        <taxon>Chlorobiaceae</taxon>
        <taxon>Chlorobium/Pelodictyon group</taxon>
        <taxon>Chlorobium</taxon>
    </lineage>
</organism>
<sequence>MSNYYAALALTLLAGISTGIGSLLALMVNHTNKKFLTFALGFSAGIMLYVSFVEIMPQSGQTLAEEMPKHAAGWITTAAFFGGMLFIWLIDQLVPNFENPHEMSMIGTMNTAPSEEARLHRMGIFTAAAIAIHNFPEGLAVFFSALSNPDLGVVIAATIALHNIPEGMAVAVPIYFATKSRMKAFSYSFLSGLAEPLGAIIGYALLKPFLSPLVFACVLGGVAGIMVYISLDELLPAAEEYGEHHIAISGLILGMGVMAVSLLMLA</sequence>
<proteinExistence type="inferred from homology"/>
<evidence type="ECO:0000255" key="1">
    <source>
        <dbReference type="HAMAP-Rule" id="MF_00548"/>
    </source>
</evidence>
<name>ZUPT_CHLL2</name>